<organism>
    <name type="scientific">Staphylococcus aureus (strain COL)</name>
    <dbReference type="NCBI Taxonomy" id="93062"/>
    <lineage>
        <taxon>Bacteria</taxon>
        <taxon>Bacillati</taxon>
        <taxon>Bacillota</taxon>
        <taxon>Bacilli</taxon>
        <taxon>Bacillales</taxon>
        <taxon>Staphylococcaceae</taxon>
        <taxon>Staphylococcus</taxon>
    </lineage>
</organism>
<feature type="chain" id="PRO_0000130714" description="Large ribosomal subunit protein uL24">
    <location>
        <begin position="1"/>
        <end position="105"/>
    </location>
</feature>
<comment type="function">
    <text evidence="1">One of two assembly initiator proteins, it binds directly to the 5'-end of the 23S rRNA, where it nucleates assembly of the 50S subunit.</text>
</comment>
<comment type="function">
    <text evidence="1">One of the proteins that surrounds the polypeptide exit tunnel on the outside of the subunit.</text>
</comment>
<comment type="subunit">
    <text evidence="1">Part of the 50S ribosomal subunit.</text>
</comment>
<comment type="similarity">
    <text evidence="1">Belongs to the universal ribosomal protein uL24 family.</text>
</comment>
<evidence type="ECO:0000255" key="1">
    <source>
        <dbReference type="HAMAP-Rule" id="MF_01326"/>
    </source>
</evidence>
<evidence type="ECO:0000305" key="2"/>
<keyword id="KW-0687">Ribonucleoprotein</keyword>
<keyword id="KW-0689">Ribosomal protein</keyword>
<keyword id="KW-0694">RNA-binding</keyword>
<keyword id="KW-0699">rRNA-binding</keyword>
<accession>Q5HDW9</accession>
<reference key="1">
    <citation type="journal article" date="2005" name="J. Bacteriol.">
        <title>Insights on evolution of virulence and resistance from the complete genome analysis of an early methicillin-resistant Staphylococcus aureus strain and a biofilm-producing methicillin-resistant Staphylococcus epidermidis strain.</title>
        <authorList>
            <person name="Gill S.R."/>
            <person name="Fouts D.E."/>
            <person name="Archer G.L."/>
            <person name="Mongodin E.F."/>
            <person name="DeBoy R.T."/>
            <person name="Ravel J."/>
            <person name="Paulsen I.T."/>
            <person name="Kolonay J.F."/>
            <person name="Brinkac L.M."/>
            <person name="Beanan M.J."/>
            <person name="Dodson R.J."/>
            <person name="Daugherty S.C."/>
            <person name="Madupu R."/>
            <person name="Angiuoli S.V."/>
            <person name="Durkin A.S."/>
            <person name="Haft D.H."/>
            <person name="Vamathevan J.J."/>
            <person name="Khouri H."/>
            <person name="Utterback T.R."/>
            <person name="Lee C."/>
            <person name="Dimitrov G."/>
            <person name="Jiang L."/>
            <person name="Qin H."/>
            <person name="Weidman J."/>
            <person name="Tran K."/>
            <person name="Kang K.H."/>
            <person name="Hance I.R."/>
            <person name="Nelson K.E."/>
            <person name="Fraser C.M."/>
        </authorList>
    </citation>
    <scope>NUCLEOTIDE SEQUENCE [LARGE SCALE GENOMIC DNA]</scope>
    <source>
        <strain>COL</strain>
    </source>
</reference>
<gene>
    <name evidence="1" type="primary">rplX</name>
    <name type="ordered locus">SACOL2228</name>
</gene>
<protein>
    <recommendedName>
        <fullName evidence="1">Large ribosomal subunit protein uL24</fullName>
    </recommendedName>
    <alternativeName>
        <fullName evidence="2">50S ribosomal protein L24</fullName>
    </alternativeName>
</protein>
<sequence>MHIKKGDNVKVIAGKDKGKEGKVIATLPKKDRVVVEGVNIMKKHQKPTQLNPEGGILETEAAIHVSNVQLLDPKTNEPTRVGYKFVDGKKVRIAKKSGEEIKSNN</sequence>
<dbReference type="EMBL" id="CP000046">
    <property type="protein sequence ID" value="AAW37103.1"/>
    <property type="molecule type" value="Genomic_DNA"/>
</dbReference>
<dbReference type="RefSeq" id="WP_000547687.1">
    <property type="nucleotide sequence ID" value="NZ_JBGOFO010000004.1"/>
</dbReference>
<dbReference type="SMR" id="Q5HDW9"/>
<dbReference type="KEGG" id="sac:SACOL2228"/>
<dbReference type="HOGENOM" id="CLU_093315_2_0_9"/>
<dbReference type="Proteomes" id="UP000000530">
    <property type="component" value="Chromosome"/>
</dbReference>
<dbReference type="GO" id="GO:1990904">
    <property type="term" value="C:ribonucleoprotein complex"/>
    <property type="evidence" value="ECO:0007669"/>
    <property type="project" value="UniProtKB-KW"/>
</dbReference>
<dbReference type="GO" id="GO:0005840">
    <property type="term" value="C:ribosome"/>
    <property type="evidence" value="ECO:0007669"/>
    <property type="project" value="UniProtKB-KW"/>
</dbReference>
<dbReference type="GO" id="GO:0019843">
    <property type="term" value="F:rRNA binding"/>
    <property type="evidence" value="ECO:0007669"/>
    <property type="project" value="UniProtKB-UniRule"/>
</dbReference>
<dbReference type="GO" id="GO:0003735">
    <property type="term" value="F:structural constituent of ribosome"/>
    <property type="evidence" value="ECO:0007669"/>
    <property type="project" value="InterPro"/>
</dbReference>
<dbReference type="GO" id="GO:0006412">
    <property type="term" value="P:translation"/>
    <property type="evidence" value="ECO:0007669"/>
    <property type="project" value="UniProtKB-UniRule"/>
</dbReference>
<dbReference type="CDD" id="cd06089">
    <property type="entry name" value="KOW_RPL26"/>
    <property type="match status" value="1"/>
</dbReference>
<dbReference type="FunFam" id="2.30.30.30:FF:000004">
    <property type="entry name" value="50S ribosomal protein L24"/>
    <property type="match status" value="1"/>
</dbReference>
<dbReference type="Gene3D" id="2.30.30.30">
    <property type="match status" value="1"/>
</dbReference>
<dbReference type="HAMAP" id="MF_01326_B">
    <property type="entry name" value="Ribosomal_uL24_B"/>
    <property type="match status" value="1"/>
</dbReference>
<dbReference type="InterPro" id="IPR005824">
    <property type="entry name" value="KOW"/>
</dbReference>
<dbReference type="InterPro" id="IPR014722">
    <property type="entry name" value="Rib_uL2_dom2"/>
</dbReference>
<dbReference type="InterPro" id="IPR003256">
    <property type="entry name" value="Ribosomal_uL24"/>
</dbReference>
<dbReference type="InterPro" id="IPR005825">
    <property type="entry name" value="Ribosomal_uL24_CS"/>
</dbReference>
<dbReference type="InterPro" id="IPR041988">
    <property type="entry name" value="Ribosomal_uL24_KOW"/>
</dbReference>
<dbReference type="InterPro" id="IPR008991">
    <property type="entry name" value="Translation_prot_SH3-like_sf"/>
</dbReference>
<dbReference type="NCBIfam" id="TIGR01079">
    <property type="entry name" value="rplX_bact"/>
    <property type="match status" value="1"/>
</dbReference>
<dbReference type="PANTHER" id="PTHR12903">
    <property type="entry name" value="MITOCHONDRIAL RIBOSOMAL PROTEIN L24"/>
    <property type="match status" value="1"/>
</dbReference>
<dbReference type="Pfam" id="PF00467">
    <property type="entry name" value="KOW"/>
    <property type="match status" value="1"/>
</dbReference>
<dbReference type="Pfam" id="PF17136">
    <property type="entry name" value="ribosomal_L24"/>
    <property type="match status" value="1"/>
</dbReference>
<dbReference type="SMART" id="SM00739">
    <property type="entry name" value="KOW"/>
    <property type="match status" value="1"/>
</dbReference>
<dbReference type="SUPFAM" id="SSF50104">
    <property type="entry name" value="Translation proteins SH3-like domain"/>
    <property type="match status" value="1"/>
</dbReference>
<dbReference type="PROSITE" id="PS01108">
    <property type="entry name" value="RIBOSOMAL_L24"/>
    <property type="match status" value="1"/>
</dbReference>
<proteinExistence type="inferred from homology"/>
<name>RL24_STAAC</name>